<reference key="1">
    <citation type="journal article" date="2002" name="Plant J.">
        <title>OsPNH1 regulates leaf development and maintenance of the shoot apical meristem in rice.</title>
        <authorList>
            <person name="Nishimura A."/>
            <person name="Ito M."/>
            <person name="Kamiya N."/>
            <person name="Sato Y."/>
            <person name="Matsuoka M."/>
        </authorList>
    </citation>
    <scope>NUCLEOTIDE SEQUENCE [MRNA]</scope>
    <source>
        <strain>cv. Taichung 65</strain>
        <tissue>Embryo</tissue>
    </source>
</reference>
<reference key="2">
    <citation type="journal article" date="2005" name="Nature">
        <title>The map-based sequence of the rice genome.</title>
        <authorList>
            <consortium name="International rice genome sequencing project (IRGSP)"/>
        </authorList>
    </citation>
    <scope>NUCLEOTIDE SEQUENCE [LARGE SCALE GENOMIC DNA]</scope>
    <source>
        <strain>cv. Nipponbare</strain>
    </source>
</reference>
<reference key="3">
    <citation type="journal article" date="2008" name="Nucleic Acids Res.">
        <title>The rice annotation project database (RAP-DB): 2008 update.</title>
        <authorList>
            <consortium name="The rice annotation project (RAP)"/>
        </authorList>
    </citation>
    <scope>GENOME REANNOTATION</scope>
    <source>
        <strain>cv. Nipponbare</strain>
    </source>
</reference>
<reference key="4">
    <citation type="journal article" date="2013" name="Rice">
        <title>Improvement of the Oryza sativa Nipponbare reference genome using next generation sequence and optical map data.</title>
        <authorList>
            <person name="Kawahara Y."/>
            <person name="de la Bastide M."/>
            <person name="Hamilton J.P."/>
            <person name="Kanamori H."/>
            <person name="McCombie W.R."/>
            <person name="Ouyang S."/>
            <person name="Schwartz D.C."/>
            <person name="Tanaka T."/>
            <person name="Wu J."/>
            <person name="Zhou S."/>
            <person name="Childs K.L."/>
            <person name="Davidson R.M."/>
            <person name="Lin H."/>
            <person name="Quesada-Ocampo L."/>
            <person name="Vaillancourt B."/>
            <person name="Sakai H."/>
            <person name="Lee S.S."/>
            <person name="Kim J."/>
            <person name="Numa H."/>
            <person name="Itoh T."/>
            <person name="Buell C.R."/>
            <person name="Matsumoto T."/>
        </authorList>
    </citation>
    <scope>GENOME REANNOTATION</scope>
    <source>
        <strain>cv. Nipponbare</strain>
    </source>
</reference>
<reference key="5">
    <citation type="journal article" date="2005" name="PLoS Biol.">
        <title>The genomes of Oryza sativa: a history of duplications.</title>
        <authorList>
            <person name="Yu J."/>
            <person name="Wang J."/>
            <person name="Lin W."/>
            <person name="Li S."/>
            <person name="Li H."/>
            <person name="Zhou J."/>
            <person name="Ni P."/>
            <person name="Dong W."/>
            <person name="Hu S."/>
            <person name="Zeng C."/>
            <person name="Zhang J."/>
            <person name="Zhang Y."/>
            <person name="Li R."/>
            <person name="Xu Z."/>
            <person name="Li S."/>
            <person name="Li X."/>
            <person name="Zheng H."/>
            <person name="Cong L."/>
            <person name="Lin L."/>
            <person name="Yin J."/>
            <person name="Geng J."/>
            <person name="Li G."/>
            <person name="Shi J."/>
            <person name="Liu J."/>
            <person name="Lv H."/>
            <person name="Li J."/>
            <person name="Wang J."/>
            <person name="Deng Y."/>
            <person name="Ran L."/>
            <person name="Shi X."/>
            <person name="Wang X."/>
            <person name="Wu Q."/>
            <person name="Li C."/>
            <person name="Ren X."/>
            <person name="Wang J."/>
            <person name="Wang X."/>
            <person name="Li D."/>
            <person name="Liu D."/>
            <person name="Zhang X."/>
            <person name="Ji Z."/>
            <person name="Zhao W."/>
            <person name="Sun Y."/>
            <person name="Zhang Z."/>
            <person name="Bao J."/>
            <person name="Han Y."/>
            <person name="Dong L."/>
            <person name="Ji J."/>
            <person name="Chen P."/>
            <person name="Wu S."/>
            <person name="Liu J."/>
            <person name="Xiao Y."/>
            <person name="Bu D."/>
            <person name="Tan J."/>
            <person name="Yang L."/>
            <person name="Ye C."/>
            <person name="Zhang J."/>
            <person name="Xu J."/>
            <person name="Zhou Y."/>
            <person name="Yu Y."/>
            <person name="Zhang B."/>
            <person name="Zhuang S."/>
            <person name="Wei H."/>
            <person name="Liu B."/>
            <person name="Lei M."/>
            <person name="Yu H."/>
            <person name="Li Y."/>
            <person name="Xu H."/>
            <person name="Wei S."/>
            <person name="He X."/>
            <person name="Fang L."/>
            <person name="Zhang Z."/>
            <person name="Zhang Y."/>
            <person name="Huang X."/>
            <person name="Su Z."/>
            <person name="Tong W."/>
            <person name="Li J."/>
            <person name="Tong Z."/>
            <person name="Li S."/>
            <person name="Ye J."/>
            <person name="Wang L."/>
            <person name="Fang L."/>
            <person name="Lei T."/>
            <person name="Chen C.-S."/>
            <person name="Chen H.-C."/>
            <person name="Xu Z."/>
            <person name="Li H."/>
            <person name="Huang H."/>
            <person name="Zhang F."/>
            <person name="Xu H."/>
            <person name="Li N."/>
            <person name="Zhao C."/>
            <person name="Li S."/>
            <person name="Dong L."/>
            <person name="Huang Y."/>
            <person name="Li L."/>
            <person name="Xi Y."/>
            <person name="Qi Q."/>
            <person name="Li W."/>
            <person name="Zhang B."/>
            <person name="Hu W."/>
            <person name="Zhang Y."/>
            <person name="Tian X."/>
            <person name="Jiao Y."/>
            <person name="Liang X."/>
            <person name="Jin J."/>
            <person name="Gao L."/>
            <person name="Zheng W."/>
            <person name="Hao B."/>
            <person name="Liu S.-M."/>
            <person name="Wang W."/>
            <person name="Yuan L."/>
            <person name="Cao M."/>
            <person name="McDermott J."/>
            <person name="Samudrala R."/>
            <person name="Wang J."/>
            <person name="Wong G.K.-S."/>
            <person name="Yang H."/>
        </authorList>
    </citation>
    <scope>NUCLEOTIDE SEQUENCE [LARGE SCALE GENOMIC DNA]</scope>
    <source>
        <strain>cv. Nipponbare</strain>
    </source>
</reference>
<reference key="6">
    <citation type="journal article" date="2003" name="Science">
        <title>Collection, mapping, and annotation of over 28,000 cDNA clones from japonica rice.</title>
        <authorList>
            <consortium name="The rice full-length cDNA consortium"/>
        </authorList>
    </citation>
    <scope>NUCLEOTIDE SEQUENCE [LARGE SCALE MRNA]</scope>
    <source>
        <strain>cv. Nipponbare</strain>
    </source>
</reference>
<reference key="7">
    <citation type="journal article" date="2008" name="BMC Genomics">
        <title>Genome-wide identification, organization and phylogenetic analysis of dicer-like, argonaute and RNA-dependent RNA polymerase gene families and their expression analysis during reproductive development and stress in rice.</title>
        <authorList>
            <person name="Kapoor M."/>
            <person name="Arora R."/>
            <person name="Lama T."/>
            <person name="Nijhawan A."/>
            <person name="Khurana J.P."/>
            <person name="Tyagi A.K."/>
            <person name="Kapoor S."/>
        </authorList>
    </citation>
    <scope>GENE FAMILY</scope>
    <scope>NOMENCLATURE</scope>
</reference>
<proteinExistence type="evidence at transcript level"/>
<keyword id="KW-1185">Reference proteome</keyword>
<keyword id="KW-0943">RNA-mediated gene silencing</keyword>
<gene>
    <name type="primary">AGO1C</name>
    <name type="synonym">AGO1</name>
    <name type="ordered locus">Os02g0831600</name>
    <name type="ordered locus">LOC_Os02g58490</name>
    <name type="ORF">OJ1149_C12.13</name>
    <name type="ORF">OsJ_08998</name>
</gene>
<comment type="function">
    <text evidence="1">Probably involved in the RNA silencing pathway. May bind to short RNAs such as microRNAs (miRNAs) or short interfering RNAs (siRNAs), and represses the translation of mRNAs which are complementary to them (By similarity).</text>
</comment>
<comment type="similarity">
    <text evidence="5">Belongs to the argonaute family. Ago subfamily.</text>
</comment>
<comment type="sequence caution" evidence="5">
    <conflict type="miscellaneous discrepancy">
        <sequence resource="EMBL-CDS" id="BAB96814"/>
    </conflict>
    <text>Sequencing errors.</text>
</comment>
<name>AGO1C_ORYSJ</name>
<sequence>MASRRPTHRHHTEAPDPGGRGRGRGRAARYAQPQPQPQQQQQQQGRGCRARGASPPPPPQQQQQQQPRSTPTRATTVTVASSSSTTATASSSPLAPELRQAIMEAPRPSELAQPSPTPPQEQPVDAATTTPHHIPSSSKSIRFPLRPGKGTIGTRCMVKANHFFAHLPNKDLHHYDVSITPEVTSRIVNRAVIKELVNLYKASYLGGRLPAYDGRKSLYTAGPLPFTSQEFQITLLDDDDGSGSERRQRTFRVVIKFAARADLHRLELFLAGRHAEAPQEALQVLDIVLRELPSARYAPFGRSFFSPYLGRRQPLGEGLESWRGFYQSIRPTQMGLSLNIDMSATAFIEPLPVIDFVAQLLNSDIHSRPLSDAERVKIKKALRGVKVEVTHRGNMRRKYRISGLTIQPTRELTFPVDEGGTVKSVVQYFQETYGFAIQHTYLPCLTVQRLNYLPMEVCKIVEGQRYSKRLNQNQIRALLEETCQHPRDRERDIIKMVKHNAYQDDPYAKEFGIKISDRLASVEARILPAPRLKYNETGREKDCLPRVGQWNMMNKKMVNGGKVRSWMCVNFARNVQESVVRGFCHELALMCQASGMDFAPEPILPPLNAHPDQVERALKARYHDAMNVLGPQRRELDLLIGILPDNNGSLYGDLKRVCEIDLGIVSQCCCTKQVFKMNKQILANLALKINVKVGGRNTVLVDAVSRRIPLVTDRPTIIFGADVTHPHPGEDSSPSIAAVVASQDWPEVTKYAGLVSAQAHRQELIEDLYKIWQDPQRGTVSGGMIRELLISFKRSTGEKPQRIIFYRDGVSEGQFYQVLLYELNAIRKACASLETNYQPKVTFIVVQKRHHTRLFAHNHNDQNSVDRSGNILPGTVVDSKICHPTEFDFYLCSHAGIKGTSRPAHYHVLWDENNFTADALQILTNNLCYTYARCTRSVSIVPPAYYAHLAAFRARFYMEPDTSDSSSVVSGPGVRGPLSGSSTSRTRAPGGAAVKPLPALKDSVKRVMFYC</sequence>
<feature type="chain" id="PRO_0000378427" description="Protein argonaute 1C">
    <location>
        <begin position="1"/>
        <end position="1011"/>
    </location>
</feature>
<feature type="domain" description="PAZ" evidence="2">
    <location>
        <begin position="352"/>
        <end position="462"/>
    </location>
</feature>
<feature type="domain" description="Piwi" evidence="3">
    <location>
        <begin position="638"/>
        <end position="959"/>
    </location>
</feature>
<feature type="region of interest" description="Disordered" evidence="4">
    <location>
        <begin position="1"/>
        <end position="95"/>
    </location>
</feature>
<feature type="region of interest" description="Disordered" evidence="4">
    <location>
        <begin position="107"/>
        <end position="147"/>
    </location>
</feature>
<feature type="region of interest" description="Disordered" evidence="4">
    <location>
        <begin position="963"/>
        <end position="994"/>
    </location>
</feature>
<feature type="compositionally biased region" description="Basic residues" evidence="4">
    <location>
        <begin position="1"/>
        <end position="11"/>
    </location>
</feature>
<feature type="compositionally biased region" description="Low complexity" evidence="4">
    <location>
        <begin position="28"/>
        <end position="53"/>
    </location>
</feature>
<feature type="compositionally biased region" description="Low complexity" evidence="4">
    <location>
        <begin position="61"/>
        <end position="92"/>
    </location>
</feature>
<feature type="compositionally biased region" description="Polar residues" evidence="4">
    <location>
        <begin position="127"/>
        <end position="140"/>
    </location>
</feature>
<feature type="compositionally biased region" description="Low complexity" evidence="4">
    <location>
        <begin position="963"/>
        <end position="982"/>
    </location>
</feature>
<feature type="sequence conflict" description="In Ref. 6; AK103279." evidence="5" ref="6">
    <original>P</original>
    <variation>A</variation>
    <location>
        <position position="307"/>
    </location>
</feature>
<feature type="sequence conflict" description="In Ref. 6; AK103279." evidence="5" ref="6">
    <original>C</original>
    <variation>R</variation>
    <location>
        <position position="882"/>
    </location>
</feature>
<dbReference type="EMBL" id="AB081951">
    <property type="protein sequence ID" value="BAB96814.1"/>
    <property type="status" value="ALT_SEQ"/>
    <property type="molecule type" value="mRNA"/>
</dbReference>
<dbReference type="EMBL" id="AP004082">
    <property type="protein sequence ID" value="BAD23006.1"/>
    <property type="molecule type" value="Genomic_DNA"/>
</dbReference>
<dbReference type="EMBL" id="AP008208">
    <property type="protein sequence ID" value="BAF10535.1"/>
    <property type="molecule type" value="Genomic_DNA"/>
</dbReference>
<dbReference type="EMBL" id="AP014958">
    <property type="protein sequence ID" value="BAS81760.1"/>
    <property type="molecule type" value="Genomic_DNA"/>
</dbReference>
<dbReference type="EMBL" id="CM000139">
    <property type="protein sequence ID" value="EEE58113.1"/>
    <property type="molecule type" value="Genomic_DNA"/>
</dbReference>
<dbReference type="EMBL" id="AK103279">
    <property type="status" value="NOT_ANNOTATED_CDS"/>
    <property type="molecule type" value="mRNA"/>
</dbReference>
<dbReference type="RefSeq" id="XP_015626468.1">
    <property type="nucleotide sequence ID" value="XM_015770982.1"/>
</dbReference>
<dbReference type="RefSeq" id="XP_015626469.1">
    <property type="nucleotide sequence ID" value="XM_015770983.1"/>
</dbReference>
<dbReference type="SMR" id="Q6K972"/>
<dbReference type="FunCoup" id="Q6K972">
    <property type="interactions" value="1872"/>
</dbReference>
<dbReference type="STRING" id="39947.Q6K972"/>
<dbReference type="iPTMnet" id="Q6K972"/>
<dbReference type="PaxDb" id="39947-Q6K972"/>
<dbReference type="EnsemblPlants" id="Os02t0831600-01">
    <property type="protein sequence ID" value="Os02t0831600-01"/>
    <property type="gene ID" value="Os02g0831600"/>
</dbReference>
<dbReference type="Gramene" id="Os02t0831600-01">
    <property type="protein sequence ID" value="Os02t0831600-01"/>
    <property type="gene ID" value="Os02g0831600"/>
</dbReference>
<dbReference type="KEGG" id="dosa:Os02g0831600"/>
<dbReference type="eggNOG" id="KOG1041">
    <property type="taxonomic scope" value="Eukaryota"/>
</dbReference>
<dbReference type="HOGENOM" id="CLU_004544_0_0_1"/>
<dbReference type="InParanoid" id="Q6K972"/>
<dbReference type="OMA" id="DLYKIWQ"/>
<dbReference type="OrthoDB" id="10252740at2759"/>
<dbReference type="Proteomes" id="UP000000763">
    <property type="component" value="Chromosome 2"/>
</dbReference>
<dbReference type="Proteomes" id="UP000007752">
    <property type="component" value="Chromosome 2"/>
</dbReference>
<dbReference type="Proteomes" id="UP000059680">
    <property type="component" value="Chromosome 2"/>
</dbReference>
<dbReference type="GO" id="GO:0005737">
    <property type="term" value="C:cytoplasm"/>
    <property type="evidence" value="ECO:0000318"/>
    <property type="project" value="GO_Central"/>
</dbReference>
<dbReference type="GO" id="GO:0005634">
    <property type="term" value="C:nucleus"/>
    <property type="evidence" value="ECO:0000318"/>
    <property type="project" value="GO_Central"/>
</dbReference>
<dbReference type="GO" id="GO:0003723">
    <property type="term" value="F:RNA binding"/>
    <property type="evidence" value="ECO:0000318"/>
    <property type="project" value="GO_Central"/>
</dbReference>
<dbReference type="GO" id="GO:0004521">
    <property type="term" value="F:RNA endonuclease activity"/>
    <property type="evidence" value="ECO:0000318"/>
    <property type="project" value="GO_Central"/>
</dbReference>
<dbReference type="GO" id="GO:0031047">
    <property type="term" value="P:regulatory ncRNA-mediated gene silencing"/>
    <property type="evidence" value="ECO:0000318"/>
    <property type="project" value="GO_Central"/>
</dbReference>
<dbReference type="CDD" id="cd02846">
    <property type="entry name" value="PAZ_argonaute_like"/>
    <property type="match status" value="1"/>
</dbReference>
<dbReference type="CDD" id="cd04657">
    <property type="entry name" value="Piwi_ago-like"/>
    <property type="match status" value="1"/>
</dbReference>
<dbReference type="FunFam" id="3.40.50.2300:FF:000110">
    <property type="entry name" value="Argonaute 10"/>
    <property type="match status" value="1"/>
</dbReference>
<dbReference type="FunFam" id="3.30.420.10:FF:000013">
    <property type="entry name" value="protein argonaute 10-like"/>
    <property type="match status" value="1"/>
</dbReference>
<dbReference type="FunFam" id="2.170.260.10:FF:000001">
    <property type="entry name" value="Protein argonaute-2"/>
    <property type="match status" value="1"/>
</dbReference>
<dbReference type="Gene3D" id="3.40.50.2300">
    <property type="match status" value="1"/>
</dbReference>
<dbReference type="Gene3D" id="2.170.260.10">
    <property type="entry name" value="paz domain"/>
    <property type="match status" value="1"/>
</dbReference>
<dbReference type="Gene3D" id="3.30.420.10">
    <property type="entry name" value="Ribonuclease H-like superfamily/Ribonuclease H"/>
    <property type="match status" value="1"/>
</dbReference>
<dbReference type="InterPro" id="IPR014811">
    <property type="entry name" value="ArgoL1"/>
</dbReference>
<dbReference type="InterPro" id="IPR032472">
    <property type="entry name" value="ArgoL2"/>
</dbReference>
<dbReference type="InterPro" id="IPR032473">
    <property type="entry name" value="Argonaute_Mid_dom"/>
</dbReference>
<dbReference type="InterPro" id="IPR032474">
    <property type="entry name" value="Argonaute_N"/>
</dbReference>
<dbReference type="InterPro" id="IPR003100">
    <property type="entry name" value="PAZ_dom"/>
</dbReference>
<dbReference type="InterPro" id="IPR036085">
    <property type="entry name" value="PAZ_dom_sf"/>
</dbReference>
<dbReference type="InterPro" id="IPR003165">
    <property type="entry name" value="Piwi"/>
</dbReference>
<dbReference type="InterPro" id="IPR045246">
    <property type="entry name" value="Piwi_ago-like"/>
</dbReference>
<dbReference type="InterPro" id="IPR012337">
    <property type="entry name" value="RNaseH-like_sf"/>
</dbReference>
<dbReference type="InterPro" id="IPR036397">
    <property type="entry name" value="RNaseH_sf"/>
</dbReference>
<dbReference type="PANTHER" id="PTHR22891">
    <property type="entry name" value="EUKARYOTIC TRANSLATION INITIATION FACTOR 2C"/>
    <property type="match status" value="1"/>
</dbReference>
<dbReference type="Pfam" id="PF08699">
    <property type="entry name" value="ArgoL1"/>
    <property type="match status" value="1"/>
</dbReference>
<dbReference type="Pfam" id="PF16488">
    <property type="entry name" value="ArgoL2"/>
    <property type="match status" value="1"/>
</dbReference>
<dbReference type="Pfam" id="PF16487">
    <property type="entry name" value="ArgoMid"/>
    <property type="match status" value="1"/>
</dbReference>
<dbReference type="Pfam" id="PF16486">
    <property type="entry name" value="ArgoN"/>
    <property type="match status" value="1"/>
</dbReference>
<dbReference type="Pfam" id="PF02170">
    <property type="entry name" value="PAZ"/>
    <property type="match status" value="1"/>
</dbReference>
<dbReference type="Pfam" id="PF02171">
    <property type="entry name" value="Piwi"/>
    <property type="match status" value="1"/>
</dbReference>
<dbReference type="SMART" id="SM01163">
    <property type="entry name" value="DUF1785"/>
    <property type="match status" value="1"/>
</dbReference>
<dbReference type="SMART" id="SM00949">
    <property type="entry name" value="PAZ"/>
    <property type="match status" value="1"/>
</dbReference>
<dbReference type="SMART" id="SM00950">
    <property type="entry name" value="Piwi"/>
    <property type="match status" value="1"/>
</dbReference>
<dbReference type="SUPFAM" id="SSF101690">
    <property type="entry name" value="PAZ domain"/>
    <property type="match status" value="1"/>
</dbReference>
<dbReference type="SUPFAM" id="SSF53098">
    <property type="entry name" value="Ribonuclease H-like"/>
    <property type="match status" value="1"/>
</dbReference>
<dbReference type="PROSITE" id="PS50821">
    <property type="entry name" value="PAZ"/>
    <property type="match status" value="1"/>
</dbReference>
<dbReference type="PROSITE" id="PS50822">
    <property type="entry name" value="PIWI"/>
    <property type="match status" value="1"/>
</dbReference>
<protein>
    <recommendedName>
        <fullName>Protein argonaute 1C</fullName>
        <shortName>OsAGO1c</shortName>
    </recommendedName>
    <alternativeName>
        <fullName>Protein argonaute 1</fullName>
        <shortName>OsAGO1</shortName>
    </alternativeName>
</protein>
<accession>Q6K972</accession>
<accession>A0A0P0VRQ6</accession>
<accession>Q8LNZ9</accession>
<evidence type="ECO:0000250" key="1"/>
<evidence type="ECO:0000255" key="2">
    <source>
        <dbReference type="PROSITE-ProRule" id="PRU00142"/>
    </source>
</evidence>
<evidence type="ECO:0000255" key="3">
    <source>
        <dbReference type="PROSITE-ProRule" id="PRU00150"/>
    </source>
</evidence>
<evidence type="ECO:0000256" key="4">
    <source>
        <dbReference type="SAM" id="MobiDB-lite"/>
    </source>
</evidence>
<evidence type="ECO:0000305" key="5"/>
<organism>
    <name type="scientific">Oryza sativa subsp. japonica</name>
    <name type="common">Rice</name>
    <dbReference type="NCBI Taxonomy" id="39947"/>
    <lineage>
        <taxon>Eukaryota</taxon>
        <taxon>Viridiplantae</taxon>
        <taxon>Streptophyta</taxon>
        <taxon>Embryophyta</taxon>
        <taxon>Tracheophyta</taxon>
        <taxon>Spermatophyta</taxon>
        <taxon>Magnoliopsida</taxon>
        <taxon>Liliopsida</taxon>
        <taxon>Poales</taxon>
        <taxon>Poaceae</taxon>
        <taxon>BOP clade</taxon>
        <taxon>Oryzoideae</taxon>
        <taxon>Oryzeae</taxon>
        <taxon>Oryzinae</taxon>
        <taxon>Oryza</taxon>
        <taxon>Oryza sativa</taxon>
    </lineage>
</organism>